<comment type="function">
    <text evidence="1">May play a role in DNA repair. It seems to be involved in an RecBC-independent recombinational process of DNA repair. It may act with RecF and RecO.</text>
</comment>
<comment type="similarity">
    <text evidence="1">Belongs to the RecR family.</text>
</comment>
<proteinExistence type="inferred from homology"/>
<dbReference type="EMBL" id="CP000323">
    <property type="protein sequence ID" value="ABE74583.1"/>
    <property type="molecule type" value="Genomic_DNA"/>
</dbReference>
<dbReference type="RefSeq" id="WP_011513147.1">
    <property type="nucleotide sequence ID" value="NC_007969.1"/>
</dbReference>
<dbReference type="SMR" id="Q1QCM0"/>
<dbReference type="STRING" id="335284.Pcryo_0800"/>
<dbReference type="KEGG" id="pcr:Pcryo_0800"/>
<dbReference type="eggNOG" id="COG0353">
    <property type="taxonomic scope" value="Bacteria"/>
</dbReference>
<dbReference type="HOGENOM" id="CLU_060739_1_2_6"/>
<dbReference type="Proteomes" id="UP000002425">
    <property type="component" value="Chromosome"/>
</dbReference>
<dbReference type="GO" id="GO:0003677">
    <property type="term" value="F:DNA binding"/>
    <property type="evidence" value="ECO:0007669"/>
    <property type="project" value="UniProtKB-UniRule"/>
</dbReference>
<dbReference type="GO" id="GO:0008270">
    <property type="term" value="F:zinc ion binding"/>
    <property type="evidence" value="ECO:0007669"/>
    <property type="project" value="UniProtKB-KW"/>
</dbReference>
<dbReference type="GO" id="GO:0006310">
    <property type="term" value="P:DNA recombination"/>
    <property type="evidence" value="ECO:0007669"/>
    <property type="project" value="UniProtKB-UniRule"/>
</dbReference>
<dbReference type="GO" id="GO:0006281">
    <property type="term" value="P:DNA repair"/>
    <property type="evidence" value="ECO:0007669"/>
    <property type="project" value="UniProtKB-UniRule"/>
</dbReference>
<dbReference type="CDD" id="cd01025">
    <property type="entry name" value="TOPRIM_recR"/>
    <property type="match status" value="1"/>
</dbReference>
<dbReference type="Gene3D" id="3.40.1360.10">
    <property type="match status" value="1"/>
</dbReference>
<dbReference type="Gene3D" id="6.10.250.240">
    <property type="match status" value="1"/>
</dbReference>
<dbReference type="Gene3D" id="1.10.8.420">
    <property type="entry name" value="RecR Domain 1"/>
    <property type="match status" value="1"/>
</dbReference>
<dbReference type="HAMAP" id="MF_00017">
    <property type="entry name" value="RecR"/>
    <property type="match status" value="1"/>
</dbReference>
<dbReference type="InterPro" id="IPR000093">
    <property type="entry name" value="DNA_Rcmb_RecR"/>
</dbReference>
<dbReference type="InterPro" id="IPR023627">
    <property type="entry name" value="Rcmb_RecR"/>
</dbReference>
<dbReference type="InterPro" id="IPR015967">
    <property type="entry name" value="Rcmb_RecR_Znf"/>
</dbReference>
<dbReference type="InterPro" id="IPR006171">
    <property type="entry name" value="TOPRIM_dom"/>
</dbReference>
<dbReference type="InterPro" id="IPR034137">
    <property type="entry name" value="TOPRIM_RecR"/>
</dbReference>
<dbReference type="NCBIfam" id="TIGR00615">
    <property type="entry name" value="recR"/>
    <property type="match status" value="1"/>
</dbReference>
<dbReference type="PANTHER" id="PTHR30446">
    <property type="entry name" value="RECOMBINATION PROTEIN RECR"/>
    <property type="match status" value="1"/>
</dbReference>
<dbReference type="PANTHER" id="PTHR30446:SF0">
    <property type="entry name" value="RECOMBINATION PROTEIN RECR"/>
    <property type="match status" value="1"/>
</dbReference>
<dbReference type="Pfam" id="PF21175">
    <property type="entry name" value="RecR_C"/>
    <property type="match status" value="1"/>
</dbReference>
<dbReference type="Pfam" id="PF21176">
    <property type="entry name" value="RecR_HhH"/>
    <property type="match status" value="1"/>
</dbReference>
<dbReference type="Pfam" id="PF02132">
    <property type="entry name" value="RecR_ZnF"/>
    <property type="match status" value="1"/>
</dbReference>
<dbReference type="Pfam" id="PF13662">
    <property type="entry name" value="Toprim_4"/>
    <property type="match status" value="1"/>
</dbReference>
<dbReference type="SMART" id="SM00493">
    <property type="entry name" value="TOPRIM"/>
    <property type="match status" value="1"/>
</dbReference>
<dbReference type="SUPFAM" id="SSF111304">
    <property type="entry name" value="Recombination protein RecR"/>
    <property type="match status" value="1"/>
</dbReference>
<dbReference type="PROSITE" id="PS01300">
    <property type="entry name" value="RECR"/>
    <property type="match status" value="1"/>
</dbReference>
<dbReference type="PROSITE" id="PS50880">
    <property type="entry name" value="TOPRIM"/>
    <property type="match status" value="1"/>
</dbReference>
<gene>
    <name evidence="1" type="primary">recR</name>
    <name type="ordered locus">Pcryo_0800</name>
</gene>
<evidence type="ECO:0000255" key="1">
    <source>
        <dbReference type="HAMAP-Rule" id="MF_00017"/>
    </source>
</evidence>
<name>RECR_PSYCK</name>
<accession>Q1QCM0</accession>
<feature type="chain" id="PRO_0000322935" description="Recombination protein RecR">
    <location>
        <begin position="1"/>
        <end position="197"/>
    </location>
</feature>
<feature type="domain" description="Toprim" evidence="1">
    <location>
        <begin position="79"/>
        <end position="174"/>
    </location>
</feature>
<feature type="zinc finger region" description="C4-type" evidence="1">
    <location>
        <begin position="56"/>
        <end position="71"/>
    </location>
</feature>
<keyword id="KW-0227">DNA damage</keyword>
<keyword id="KW-0233">DNA recombination</keyword>
<keyword id="KW-0234">DNA repair</keyword>
<keyword id="KW-0479">Metal-binding</keyword>
<keyword id="KW-0862">Zinc</keyword>
<keyword id="KW-0863">Zinc-finger</keyword>
<protein>
    <recommendedName>
        <fullName evidence="1">Recombination protein RecR</fullName>
    </recommendedName>
</protein>
<reference key="1">
    <citation type="submission" date="2006-03" db="EMBL/GenBank/DDBJ databases">
        <title>Complete sequence of chromosome of Psychrobacter cryohalolentis K5.</title>
        <authorList>
            <consortium name="US DOE Joint Genome Institute"/>
            <person name="Copeland A."/>
            <person name="Lucas S."/>
            <person name="Lapidus A."/>
            <person name="Barry K."/>
            <person name="Detter J.C."/>
            <person name="Glavina T."/>
            <person name="Hammon N."/>
            <person name="Israni S."/>
            <person name="Dalin E."/>
            <person name="Tice H."/>
            <person name="Pitluck S."/>
            <person name="Brettin T."/>
            <person name="Bruce D."/>
            <person name="Han C."/>
            <person name="Tapia R."/>
            <person name="Sims D.R."/>
            <person name="Gilna P."/>
            <person name="Schmutz J."/>
            <person name="Larimer F."/>
            <person name="Land M."/>
            <person name="Hauser L."/>
            <person name="Kyrpides N."/>
            <person name="Kim E."/>
            <person name="Richardson P."/>
        </authorList>
    </citation>
    <scope>NUCLEOTIDE SEQUENCE [LARGE SCALE GENOMIC DNA]</scope>
    <source>
        <strain>ATCC BAA-1226 / DSM 17306 / VKM B-2378 / K5</strain>
    </source>
</reference>
<organism>
    <name type="scientific">Psychrobacter cryohalolentis (strain ATCC BAA-1226 / DSM 17306 / VKM B-2378 / K5)</name>
    <dbReference type="NCBI Taxonomy" id="335284"/>
    <lineage>
        <taxon>Bacteria</taxon>
        <taxon>Pseudomonadati</taxon>
        <taxon>Pseudomonadota</taxon>
        <taxon>Gammaproteobacteria</taxon>
        <taxon>Moraxellales</taxon>
        <taxon>Moraxellaceae</taxon>
        <taxon>Psychrobacter</taxon>
    </lineage>
</organism>
<sequence>MLTAKFDQLVKQLRILPGVGQKSAQRMALHLLTKKRPQGMALAQALDEAMRDIVECQRCHSFSDEAVCPLCQDPRRDDTLLCVVETAADVMAIEQTAGYRGRYFVLGGHLSPIDGISADDLNIEQLVWRVKQEPVEELILATGTTVEGQTTAHFISEAVSRHVNKVTRLAQGVPMGGELEYLDSMTLGQAMQNRSFL</sequence>